<gene>
    <name evidence="1" type="primary">ilvC</name>
    <name type="ordered locus">CHAB381_0374</name>
</gene>
<reference key="1">
    <citation type="submission" date="2007-07" db="EMBL/GenBank/DDBJ databases">
        <title>Complete genome sequence of Campylobacter hominis ATCC BAA-381, a commensal isolated from the human gastrointestinal tract.</title>
        <authorList>
            <person name="Fouts D.E."/>
            <person name="Mongodin E.F."/>
            <person name="Puiu D."/>
            <person name="Sebastian Y."/>
            <person name="Miller W.G."/>
            <person name="Mandrell R.E."/>
            <person name="Nelson K.E."/>
        </authorList>
    </citation>
    <scope>NUCLEOTIDE SEQUENCE [LARGE SCALE GENOMIC DNA]</scope>
    <source>
        <strain>ATCC BAA-381 / DSM 21671 / CCUG 45161 / LMG 19568 / NCTC 13146 / CH001A</strain>
    </source>
</reference>
<sequence length="340" mass="36827">MAVTVYYDKDCDLSLIRSKKVAMIGFGSQGHAHALNLRDSGVDVVVGLKKGGKSWAKAEAMNFKVKSVVEATKEADVIMILTPDELQADIFASEIKDNLKEGDTIAFGHGFNIHYGQIVPPKGVDCIMVAPKAPGHTVRSEFVKGGGVPNLIAVSQNASGQAKELALSYASAIGAGRTGIIETTFKDETETDLFGEQAVLCGGLCALINAGFNTLTEAGYEPEMAYFECLHEMKLIVDLIYQGGMSDMRYSISNTAEYGDYISGKKVINEDSKKAMKEILGSIQDGSFAKDFILERKAGYARMNAERKIADASLLNKTGEKLRAMMPWIKNGKLVDKDKN</sequence>
<organism>
    <name type="scientific">Campylobacter hominis (strain ATCC BAA-381 / DSM 21671 / CCUG 45161 / LMG 19568 / NCTC 13146 / CH001A)</name>
    <dbReference type="NCBI Taxonomy" id="360107"/>
    <lineage>
        <taxon>Bacteria</taxon>
        <taxon>Pseudomonadati</taxon>
        <taxon>Campylobacterota</taxon>
        <taxon>Epsilonproteobacteria</taxon>
        <taxon>Campylobacterales</taxon>
        <taxon>Campylobacteraceae</taxon>
        <taxon>Campylobacter</taxon>
    </lineage>
</organism>
<proteinExistence type="inferred from homology"/>
<keyword id="KW-0028">Amino-acid biosynthesis</keyword>
<keyword id="KW-0100">Branched-chain amino acid biosynthesis</keyword>
<keyword id="KW-0460">Magnesium</keyword>
<keyword id="KW-0479">Metal-binding</keyword>
<keyword id="KW-0521">NADP</keyword>
<keyword id="KW-0560">Oxidoreductase</keyword>
<keyword id="KW-1185">Reference proteome</keyword>
<comment type="function">
    <text evidence="1">Involved in the biosynthesis of branched-chain amino acids (BCAA). Catalyzes an alkyl-migration followed by a ketol-acid reduction of (S)-2-acetolactate (S2AL) to yield (R)-2,3-dihydroxy-isovalerate. In the isomerase reaction, S2AL is rearranged via a Mg-dependent methyl migration to produce 3-hydroxy-3-methyl-2-ketobutyrate (HMKB). In the reductase reaction, this 2-ketoacid undergoes a metal-dependent reduction by NADPH to yield (R)-2,3-dihydroxy-isovalerate.</text>
</comment>
<comment type="catalytic activity">
    <reaction evidence="1">
        <text>(2R)-2,3-dihydroxy-3-methylbutanoate + NADP(+) = (2S)-2-acetolactate + NADPH + H(+)</text>
        <dbReference type="Rhea" id="RHEA:22068"/>
        <dbReference type="ChEBI" id="CHEBI:15378"/>
        <dbReference type="ChEBI" id="CHEBI:49072"/>
        <dbReference type="ChEBI" id="CHEBI:57783"/>
        <dbReference type="ChEBI" id="CHEBI:58349"/>
        <dbReference type="ChEBI" id="CHEBI:58476"/>
        <dbReference type="EC" id="1.1.1.86"/>
    </reaction>
</comment>
<comment type="catalytic activity">
    <reaction evidence="1">
        <text>(2R,3R)-2,3-dihydroxy-3-methylpentanoate + NADP(+) = (S)-2-ethyl-2-hydroxy-3-oxobutanoate + NADPH + H(+)</text>
        <dbReference type="Rhea" id="RHEA:13493"/>
        <dbReference type="ChEBI" id="CHEBI:15378"/>
        <dbReference type="ChEBI" id="CHEBI:49256"/>
        <dbReference type="ChEBI" id="CHEBI:49258"/>
        <dbReference type="ChEBI" id="CHEBI:57783"/>
        <dbReference type="ChEBI" id="CHEBI:58349"/>
        <dbReference type="EC" id="1.1.1.86"/>
    </reaction>
</comment>
<comment type="cofactor">
    <cofactor evidence="1">
        <name>Mg(2+)</name>
        <dbReference type="ChEBI" id="CHEBI:18420"/>
    </cofactor>
    <text evidence="1">Binds 2 magnesium ions per subunit.</text>
</comment>
<comment type="pathway">
    <text evidence="1">Amino-acid biosynthesis; L-isoleucine biosynthesis; L-isoleucine from 2-oxobutanoate: step 2/4.</text>
</comment>
<comment type="pathway">
    <text evidence="1">Amino-acid biosynthesis; L-valine biosynthesis; L-valine from pyruvate: step 2/4.</text>
</comment>
<comment type="similarity">
    <text evidence="1">Belongs to the ketol-acid reductoisomerase family.</text>
</comment>
<name>ILVC_CAMHC</name>
<protein>
    <recommendedName>
        <fullName evidence="1">Ketol-acid reductoisomerase (NADP(+))</fullName>
        <shortName evidence="1">KARI</shortName>
        <ecNumber evidence="1">1.1.1.86</ecNumber>
    </recommendedName>
    <alternativeName>
        <fullName evidence="1">Acetohydroxy-acid isomeroreductase</fullName>
        <shortName evidence="1">AHIR</shortName>
    </alternativeName>
    <alternativeName>
        <fullName evidence="1">Alpha-keto-beta-hydroxylacyl reductoisomerase</fullName>
    </alternativeName>
    <alternativeName>
        <fullName evidence="1">Ketol-acid reductoisomerase type 1</fullName>
    </alternativeName>
    <alternativeName>
        <fullName evidence="1">Ketol-acid reductoisomerase type I</fullName>
    </alternativeName>
</protein>
<feature type="chain" id="PRO_1000050496" description="Ketol-acid reductoisomerase (NADP(+))">
    <location>
        <begin position="1"/>
        <end position="340"/>
    </location>
</feature>
<feature type="domain" description="KARI N-terminal Rossmann" evidence="2">
    <location>
        <begin position="1"/>
        <end position="183"/>
    </location>
</feature>
<feature type="domain" description="KARI C-terminal knotted" evidence="3">
    <location>
        <begin position="184"/>
        <end position="329"/>
    </location>
</feature>
<feature type="active site" evidence="1">
    <location>
        <position position="109"/>
    </location>
</feature>
<feature type="binding site" evidence="1">
    <location>
        <begin position="26"/>
        <end position="29"/>
    </location>
    <ligand>
        <name>NADP(+)</name>
        <dbReference type="ChEBI" id="CHEBI:58349"/>
    </ligand>
</feature>
<feature type="binding site" evidence="1">
    <location>
        <position position="49"/>
    </location>
    <ligand>
        <name>NADP(+)</name>
        <dbReference type="ChEBI" id="CHEBI:58349"/>
    </ligand>
</feature>
<feature type="binding site" evidence="1">
    <location>
        <position position="54"/>
    </location>
    <ligand>
        <name>NADP(+)</name>
        <dbReference type="ChEBI" id="CHEBI:58349"/>
    </ligand>
</feature>
<feature type="binding site" evidence="1">
    <location>
        <begin position="84"/>
        <end position="87"/>
    </location>
    <ligand>
        <name>NADP(+)</name>
        <dbReference type="ChEBI" id="CHEBI:58349"/>
    </ligand>
</feature>
<feature type="binding site" evidence="1">
    <location>
        <position position="135"/>
    </location>
    <ligand>
        <name>NADP(+)</name>
        <dbReference type="ChEBI" id="CHEBI:58349"/>
    </ligand>
</feature>
<feature type="binding site" evidence="1">
    <location>
        <position position="192"/>
    </location>
    <ligand>
        <name>Mg(2+)</name>
        <dbReference type="ChEBI" id="CHEBI:18420"/>
        <label>1</label>
    </ligand>
</feature>
<feature type="binding site" evidence="1">
    <location>
        <position position="192"/>
    </location>
    <ligand>
        <name>Mg(2+)</name>
        <dbReference type="ChEBI" id="CHEBI:18420"/>
        <label>2</label>
    </ligand>
</feature>
<feature type="binding site" evidence="1">
    <location>
        <position position="196"/>
    </location>
    <ligand>
        <name>Mg(2+)</name>
        <dbReference type="ChEBI" id="CHEBI:18420"/>
        <label>1</label>
    </ligand>
</feature>
<feature type="binding site" evidence="1">
    <location>
        <position position="228"/>
    </location>
    <ligand>
        <name>Mg(2+)</name>
        <dbReference type="ChEBI" id="CHEBI:18420"/>
        <label>2</label>
    </ligand>
</feature>
<feature type="binding site" evidence="1">
    <location>
        <position position="232"/>
    </location>
    <ligand>
        <name>Mg(2+)</name>
        <dbReference type="ChEBI" id="CHEBI:18420"/>
        <label>2</label>
    </ligand>
</feature>
<feature type="binding site" evidence="1">
    <location>
        <position position="253"/>
    </location>
    <ligand>
        <name>substrate</name>
    </ligand>
</feature>
<evidence type="ECO:0000255" key="1">
    <source>
        <dbReference type="HAMAP-Rule" id="MF_00435"/>
    </source>
</evidence>
<evidence type="ECO:0000255" key="2">
    <source>
        <dbReference type="PROSITE-ProRule" id="PRU01197"/>
    </source>
</evidence>
<evidence type="ECO:0000255" key="3">
    <source>
        <dbReference type="PROSITE-ProRule" id="PRU01198"/>
    </source>
</evidence>
<accession>A7I0D4</accession>
<dbReference type="EC" id="1.1.1.86" evidence="1"/>
<dbReference type="EMBL" id="CP000776">
    <property type="protein sequence ID" value="ABS51336.1"/>
    <property type="molecule type" value="Genomic_DNA"/>
</dbReference>
<dbReference type="RefSeq" id="WP_012108257.1">
    <property type="nucleotide sequence ID" value="NC_009714.1"/>
</dbReference>
<dbReference type="SMR" id="A7I0D4"/>
<dbReference type="STRING" id="360107.CHAB381_0374"/>
<dbReference type="KEGG" id="cha:CHAB381_0374"/>
<dbReference type="eggNOG" id="COG0059">
    <property type="taxonomic scope" value="Bacteria"/>
</dbReference>
<dbReference type="HOGENOM" id="CLU_033821_0_1_7"/>
<dbReference type="UniPathway" id="UPA00047">
    <property type="reaction ID" value="UER00056"/>
</dbReference>
<dbReference type="UniPathway" id="UPA00049">
    <property type="reaction ID" value="UER00060"/>
</dbReference>
<dbReference type="Proteomes" id="UP000002407">
    <property type="component" value="Chromosome"/>
</dbReference>
<dbReference type="GO" id="GO:0005829">
    <property type="term" value="C:cytosol"/>
    <property type="evidence" value="ECO:0007669"/>
    <property type="project" value="TreeGrafter"/>
</dbReference>
<dbReference type="GO" id="GO:0004455">
    <property type="term" value="F:ketol-acid reductoisomerase activity"/>
    <property type="evidence" value="ECO:0007669"/>
    <property type="project" value="UniProtKB-UniRule"/>
</dbReference>
<dbReference type="GO" id="GO:0000287">
    <property type="term" value="F:magnesium ion binding"/>
    <property type="evidence" value="ECO:0007669"/>
    <property type="project" value="UniProtKB-UniRule"/>
</dbReference>
<dbReference type="GO" id="GO:0050661">
    <property type="term" value="F:NADP binding"/>
    <property type="evidence" value="ECO:0007669"/>
    <property type="project" value="InterPro"/>
</dbReference>
<dbReference type="GO" id="GO:0009097">
    <property type="term" value="P:isoleucine biosynthetic process"/>
    <property type="evidence" value="ECO:0007669"/>
    <property type="project" value="UniProtKB-UniRule"/>
</dbReference>
<dbReference type="GO" id="GO:0009099">
    <property type="term" value="P:L-valine biosynthetic process"/>
    <property type="evidence" value="ECO:0007669"/>
    <property type="project" value="UniProtKB-UniRule"/>
</dbReference>
<dbReference type="FunFam" id="3.40.50.720:FF:000023">
    <property type="entry name" value="Ketol-acid reductoisomerase (NADP(+))"/>
    <property type="match status" value="1"/>
</dbReference>
<dbReference type="Gene3D" id="6.10.240.10">
    <property type="match status" value="1"/>
</dbReference>
<dbReference type="Gene3D" id="3.40.50.720">
    <property type="entry name" value="NAD(P)-binding Rossmann-like Domain"/>
    <property type="match status" value="1"/>
</dbReference>
<dbReference type="HAMAP" id="MF_00435">
    <property type="entry name" value="IlvC"/>
    <property type="match status" value="1"/>
</dbReference>
<dbReference type="InterPro" id="IPR008927">
    <property type="entry name" value="6-PGluconate_DH-like_C_sf"/>
</dbReference>
<dbReference type="InterPro" id="IPR013023">
    <property type="entry name" value="KARI"/>
</dbReference>
<dbReference type="InterPro" id="IPR000506">
    <property type="entry name" value="KARI_C"/>
</dbReference>
<dbReference type="InterPro" id="IPR013116">
    <property type="entry name" value="KARI_N"/>
</dbReference>
<dbReference type="InterPro" id="IPR014359">
    <property type="entry name" value="KARI_prok"/>
</dbReference>
<dbReference type="InterPro" id="IPR036291">
    <property type="entry name" value="NAD(P)-bd_dom_sf"/>
</dbReference>
<dbReference type="NCBIfam" id="TIGR00465">
    <property type="entry name" value="ilvC"/>
    <property type="match status" value="1"/>
</dbReference>
<dbReference type="NCBIfam" id="NF004017">
    <property type="entry name" value="PRK05479.1"/>
    <property type="match status" value="1"/>
</dbReference>
<dbReference type="NCBIfam" id="NF009940">
    <property type="entry name" value="PRK13403.1"/>
    <property type="match status" value="1"/>
</dbReference>
<dbReference type="PANTHER" id="PTHR21371">
    <property type="entry name" value="KETOL-ACID REDUCTOISOMERASE, MITOCHONDRIAL"/>
    <property type="match status" value="1"/>
</dbReference>
<dbReference type="PANTHER" id="PTHR21371:SF1">
    <property type="entry name" value="KETOL-ACID REDUCTOISOMERASE, MITOCHONDRIAL"/>
    <property type="match status" value="1"/>
</dbReference>
<dbReference type="Pfam" id="PF01450">
    <property type="entry name" value="KARI_C"/>
    <property type="match status" value="1"/>
</dbReference>
<dbReference type="Pfam" id="PF07991">
    <property type="entry name" value="KARI_N"/>
    <property type="match status" value="1"/>
</dbReference>
<dbReference type="PIRSF" id="PIRSF000116">
    <property type="entry name" value="IlvC_gammaproteo"/>
    <property type="match status" value="1"/>
</dbReference>
<dbReference type="SUPFAM" id="SSF48179">
    <property type="entry name" value="6-phosphogluconate dehydrogenase C-terminal domain-like"/>
    <property type="match status" value="1"/>
</dbReference>
<dbReference type="SUPFAM" id="SSF51735">
    <property type="entry name" value="NAD(P)-binding Rossmann-fold domains"/>
    <property type="match status" value="1"/>
</dbReference>
<dbReference type="PROSITE" id="PS51851">
    <property type="entry name" value="KARI_C"/>
    <property type="match status" value="1"/>
</dbReference>
<dbReference type="PROSITE" id="PS51850">
    <property type="entry name" value="KARI_N"/>
    <property type="match status" value="1"/>
</dbReference>